<proteinExistence type="inferred from homology"/>
<dbReference type="EMBL" id="CP000323">
    <property type="protein sequence ID" value="ABE74933.1"/>
    <property type="molecule type" value="Genomic_DNA"/>
</dbReference>
<dbReference type="RefSeq" id="WP_011513487.1">
    <property type="nucleotide sequence ID" value="NC_007969.1"/>
</dbReference>
<dbReference type="SMR" id="Q1QBM0"/>
<dbReference type="STRING" id="335284.Pcryo_1152"/>
<dbReference type="KEGG" id="pcr:Pcryo_1152"/>
<dbReference type="eggNOG" id="COG0445">
    <property type="taxonomic scope" value="Bacteria"/>
</dbReference>
<dbReference type="HOGENOM" id="CLU_007831_2_2_6"/>
<dbReference type="Proteomes" id="UP000002425">
    <property type="component" value="Chromosome"/>
</dbReference>
<dbReference type="GO" id="GO:0005829">
    <property type="term" value="C:cytosol"/>
    <property type="evidence" value="ECO:0007669"/>
    <property type="project" value="TreeGrafter"/>
</dbReference>
<dbReference type="GO" id="GO:0050660">
    <property type="term" value="F:flavin adenine dinucleotide binding"/>
    <property type="evidence" value="ECO:0007669"/>
    <property type="project" value="UniProtKB-UniRule"/>
</dbReference>
<dbReference type="GO" id="GO:0030488">
    <property type="term" value="P:tRNA methylation"/>
    <property type="evidence" value="ECO:0007669"/>
    <property type="project" value="TreeGrafter"/>
</dbReference>
<dbReference type="GO" id="GO:0002098">
    <property type="term" value="P:tRNA wobble uridine modification"/>
    <property type="evidence" value="ECO:0007669"/>
    <property type="project" value="InterPro"/>
</dbReference>
<dbReference type="FunFam" id="1.10.10.1800:FF:000001">
    <property type="entry name" value="tRNA uridine 5-carboxymethylaminomethyl modification enzyme MnmG"/>
    <property type="match status" value="1"/>
</dbReference>
<dbReference type="FunFam" id="1.10.150.570:FF:000001">
    <property type="entry name" value="tRNA uridine 5-carboxymethylaminomethyl modification enzyme MnmG"/>
    <property type="match status" value="1"/>
</dbReference>
<dbReference type="FunFam" id="3.50.50.60:FF:000002">
    <property type="entry name" value="tRNA uridine 5-carboxymethylaminomethyl modification enzyme MnmG"/>
    <property type="match status" value="1"/>
</dbReference>
<dbReference type="FunFam" id="3.50.50.60:FF:000010">
    <property type="entry name" value="tRNA uridine 5-carboxymethylaminomethyl modification enzyme MnmG"/>
    <property type="match status" value="1"/>
</dbReference>
<dbReference type="Gene3D" id="3.50.50.60">
    <property type="entry name" value="FAD/NAD(P)-binding domain"/>
    <property type="match status" value="2"/>
</dbReference>
<dbReference type="Gene3D" id="1.10.150.570">
    <property type="entry name" value="GidA associated domain, C-terminal subdomain"/>
    <property type="match status" value="1"/>
</dbReference>
<dbReference type="Gene3D" id="1.10.10.1800">
    <property type="entry name" value="tRNA uridine 5-carboxymethylaminomethyl modification enzyme MnmG/GidA"/>
    <property type="match status" value="1"/>
</dbReference>
<dbReference type="HAMAP" id="MF_00129">
    <property type="entry name" value="MnmG_GidA"/>
    <property type="match status" value="1"/>
</dbReference>
<dbReference type="InterPro" id="IPR036188">
    <property type="entry name" value="FAD/NAD-bd_sf"/>
</dbReference>
<dbReference type="InterPro" id="IPR049312">
    <property type="entry name" value="GIDA_C_N"/>
</dbReference>
<dbReference type="InterPro" id="IPR004416">
    <property type="entry name" value="MnmG"/>
</dbReference>
<dbReference type="InterPro" id="IPR002218">
    <property type="entry name" value="MnmG-rel"/>
</dbReference>
<dbReference type="InterPro" id="IPR020595">
    <property type="entry name" value="MnmG-rel_CS"/>
</dbReference>
<dbReference type="InterPro" id="IPR026904">
    <property type="entry name" value="MnmG_C"/>
</dbReference>
<dbReference type="InterPro" id="IPR047001">
    <property type="entry name" value="MnmG_C_subdom"/>
</dbReference>
<dbReference type="InterPro" id="IPR044920">
    <property type="entry name" value="MnmG_C_subdom_sf"/>
</dbReference>
<dbReference type="InterPro" id="IPR040131">
    <property type="entry name" value="MnmG_N"/>
</dbReference>
<dbReference type="NCBIfam" id="TIGR00136">
    <property type="entry name" value="mnmG_gidA"/>
    <property type="match status" value="1"/>
</dbReference>
<dbReference type="PANTHER" id="PTHR11806">
    <property type="entry name" value="GLUCOSE INHIBITED DIVISION PROTEIN A"/>
    <property type="match status" value="1"/>
</dbReference>
<dbReference type="PANTHER" id="PTHR11806:SF0">
    <property type="entry name" value="PROTEIN MTO1 HOMOLOG, MITOCHONDRIAL"/>
    <property type="match status" value="1"/>
</dbReference>
<dbReference type="Pfam" id="PF01134">
    <property type="entry name" value="GIDA"/>
    <property type="match status" value="1"/>
</dbReference>
<dbReference type="Pfam" id="PF21680">
    <property type="entry name" value="GIDA_C_1st"/>
    <property type="match status" value="1"/>
</dbReference>
<dbReference type="Pfam" id="PF13932">
    <property type="entry name" value="SAM_GIDA_C"/>
    <property type="match status" value="1"/>
</dbReference>
<dbReference type="SMART" id="SM01228">
    <property type="entry name" value="GIDA_assoc_3"/>
    <property type="match status" value="1"/>
</dbReference>
<dbReference type="SUPFAM" id="SSF51905">
    <property type="entry name" value="FAD/NAD(P)-binding domain"/>
    <property type="match status" value="1"/>
</dbReference>
<dbReference type="PROSITE" id="PS01280">
    <property type="entry name" value="GIDA_1"/>
    <property type="match status" value="1"/>
</dbReference>
<protein>
    <recommendedName>
        <fullName evidence="1">tRNA uridine 5-carboxymethylaminomethyl modification enzyme MnmG</fullName>
    </recommendedName>
    <alternativeName>
        <fullName evidence="1">Glucose-inhibited division protein A</fullName>
    </alternativeName>
</protein>
<evidence type="ECO:0000255" key="1">
    <source>
        <dbReference type="HAMAP-Rule" id="MF_00129"/>
    </source>
</evidence>
<organism>
    <name type="scientific">Psychrobacter cryohalolentis (strain ATCC BAA-1226 / DSM 17306 / VKM B-2378 / K5)</name>
    <dbReference type="NCBI Taxonomy" id="335284"/>
    <lineage>
        <taxon>Bacteria</taxon>
        <taxon>Pseudomonadati</taxon>
        <taxon>Pseudomonadota</taxon>
        <taxon>Gammaproteobacteria</taxon>
        <taxon>Moraxellales</taxon>
        <taxon>Moraxellaceae</taxon>
        <taxon>Psychrobacter</taxon>
    </lineage>
</organism>
<reference key="1">
    <citation type="submission" date="2006-03" db="EMBL/GenBank/DDBJ databases">
        <title>Complete sequence of chromosome of Psychrobacter cryohalolentis K5.</title>
        <authorList>
            <consortium name="US DOE Joint Genome Institute"/>
            <person name="Copeland A."/>
            <person name="Lucas S."/>
            <person name="Lapidus A."/>
            <person name="Barry K."/>
            <person name="Detter J.C."/>
            <person name="Glavina T."/>
            <person name="Hammon N."/>
            <person name="Israni S."/>
            <person name="Dalin E."/>
            <person name="Tice H."/>
            <person name="Pitluck S."/>
            <person name="Brettin T."/>
            <person name="Bruce D."/>
            <person name="Han C."/>
            <person name="Tapia R."/>
            <person name="Sims D.R."/>
            <person name="Gilna P."/>
            <person name="Schmutz J."/>
            <person name="Larimer F."/>
            <person name="Land M."/>
            <person name="Hauser L."/>
            <person name="Kyrpides N."/>
            <person name="Kim E."/>
            <person name="Richardson P."/>
        </authorList>
    </citation>
    <scope>NUCLEOTIDE SEQUENCE [LARGE SCALE GENOMIC DNA]</scope>
    <source>
        <strain>ATCC BAA-1226 / DSM 17306 / VKM B-2378 / K5</strain>
    </source>
</reference>
<sequence>MQYPKNYDVVVIGGGHAGTEAALAAARMGAQTLLLTHNIETLGQMSCNPAIGGIGKSHLVREIDALGGAMALATDKSGIQFRVLNSRKGAAVRATRAQADRILYKAAIRHTLENQPNLDIFQQAADDILVENGRATAVVTATGIIFNTQTVVLTSGTFLGGVIHIGLESSKGGRAGDQPSIKLADRLRELKLPVGRLKTGTPARIDARSVDFSVMTVQPGDTPLPVMSYMGDVSMHPEQVNCYITHTNARTHDIIRENLDRSPMFSGKIEGVGPRYCPSIEDKIHRFADKDSHQIFIEPEGLTTHELYPNGISTSLPFDVQLEFIHSMKGLENAHITRPGYAIEYDYFDPQNLKPTLETKSIDRLYFAGQINGTTGYEEAGVQGLLAGTNAALVTCENNEFDVWTPRRDEAYLGVLVDDLITHGTTEPYRMFTSRAEYRLLLREDNADQRLTETGRKLGLVDDVRWQAYEEKMEAIASETARLKDMWATPANALGKKVTEQTGEVLSKEATAFDLLKRPQIHFADIAAITDSQVDAQVGEQIEISVKYAGYIDRQQEDIDQMKRLENTALPIDFDYSVVSGLSNEIVQKLAQVRPSTLAQAGRISGVTPAAIQLLAMTVKKQKKVKAALNAS</sequence>
<gene>
    <name evidence="1" type="primary">mnmG</name>
    <name evidence="1" type="synonym">gidA</name>
    <name type="ordered locus">Pcryo_1152</name>
</gene>
<keyword id="KW-0963">Cytoplasm</keyword>
<keyword id="KW-0274">FAD</keyword>
<keyword id="KW-0285">Flavoprotein</keyword>
<keyword id="KW-0520">NAD</keyword>
<keyword id="KW-0819">tRNA processing</keyword>
<name>MNMG_PSYCK</name>
<accession>Q1QBM0</accession>
<comment type="function">
    <text evidence="1">NAD-binding protein involved in the addition of a carboxymethylaminomethyl (cmnm) group at the wobble position (U34) of certain tRNAs, forming tRNA-cmnm(5)s(2)U34.</text>
</comment>
<comment type="cofactor">
    <cofactor evidence="1">
        <name>FAD</name>
        <dbReference type="ChEBI" id="CHEBI:57692"/>
    </cofactor>
</comment>
<comment type="subunit">
    <text evidence="1">Homodimer. Heterotetramer of two MnmE and two MnmG subunits.</text>
</comment>
<comment type="subcellular location">
    <subcellularLocation>
        <location evidence="1">Cytoplasm</location>
    </subcellularLocation>
</comment>
<comment type="similarity">
    <text evidence="1">Belongs to the MnmG family.</text>
</comment>
<feature type="chain" id="PRO_1000016652" description="tRNA uridine 5-carboxymethylaminomethyl modification enzyme MnmG">
    <location>
        <begin position="1"/>
        <end position="632"/>
    </location>
</feature>
<feature type="binding site" evidence="1">
    <location>
        <begin position="13"/>
        <end position="18"/>
    </location>
    <ligand>
        <name>FAD</name>
        <dbReference type="ChEBI" id="CHEBI:57692"/>
    </ligand>
</feature>
<feature type="binding site" evidence="1">
    <location>
        <begin position="273"/>
        <end position="287"/>
    </location>
    <ligand>
        <name>NAD(+)</name>
        <dbReference type="ChEBI" id="CHEBI:57540"/>
    </ligand>
</feature>